<reference key="1">
    <citation type="submission" date="2009-01" db="EMBL/GenBank/DDBJ databases">
        <title>Complete sequence of Clostridium cellulolyticum H10.</title>
        <authorList>
            <consortium name="US DOE Joint Genome Institute"/>
            <person name="Lucas S."/>
            <person name="Copeland A."/>
            <person name="Lapidus A."/>
            <person name="Glavina del Rio T."/>
            <person name="Dalin E."/>
            <person name="Tice H."/>
            <person name="Bruce D."/>
            <person name="Goodwin L."/>
            <person name="Pitluck S."/>
            <person name="Chertkov O."/>
            <person name="Saunders E."/>
            <person name="Brettin T."/>
            <person name="Detter J.C."/>
            <person name="Han C."/>
            <person name="Larimer F."/>
            <person name="Land M."/>
            <person name="Hauser L."/>
            <person name="Kyrpides N."/>
            <person name="Ivanova N."/>
            <person name="Zhou J."/>
            <person name="Richardson P."/>
        </authorList>
    </citation>
    <scope>NUCLEOTIDE SEQUENCE [LARGE SCALE GENOMIC DNA]</scope>
    <source>
        <strain>ATCC 35319 / DSM 5812 / JCM 6584 / H10</strain>
    </source>
</reference>
<gene>
    <name evidence="1" type="primary">uvrC</name>
    <name type="ordered locus">Ccel_0807</name>
</gene>
<name>UVRC_RUMCH</name>
<keyword id="KW-0963">Cytoplasm</keyword>
<keyword id="KW-0227">DNA damage</keyword>
<keyword id="KW-0228">DNA excision</keyword>
<keyword id="KW-0234">DNA repair</keyword>
<keyword id="KW-0267">Excision nuclease</keyword>
<keyword id="KW-1185">Reference proteome</keyword>
<keyword id="KW-0742">SOS response</keyword>
<evidence type="ECO:0000255" key="1">
    <source>
        <dbReference type="HAMAP-Rule" id="MF_00203"/>
    </source>
</evidence>
<comment type="function">
    <text evidence="1">The UvrABC repair system catalyzes the recognition and processing of DNA lesions. UvrC both incises the 5' and 3' sides of the lesion. The N-terminal half is responsible for the 3' incision and the C-terminal half is responsible for the 5' incision.</text>
</comment>
<comment type="subunit">
    <text evidence="1">Interacts with UvrB in an incision complex.</text>
</comment>
<comment type="subcellular location">
    <subcellularLocation>
        <location evidence="1">Cytoplasm</location>
    </subcellularLocation>
</comment>
<comment type="similarity">
    <text evidence="1">Belongs to the UvrC family.</text>
</comment>
<sequence>MFDIQEELKKLPDKSGVYIMKDANGVVIYVGKAVVLKNRVRQYFQQSANHPPKVQAMVSKVSEFEYIVVDSEVEALMLECTLIKKYKPKYNILLKDDKHYPYIKVTLNEEYPRILKTRRVEKDGARYFGPYSSGFAVNDTIDTLKKLFSLKTCNKNLPRDIGKTRPCLNYHMKQCLAPCQGGVNRDEYREMMKKICRFLGGQYDEIINDLRIQMETAAEQLDFEKAAQLRNKITSIKQLSESQKVLFTDLEDRDIIGYSADSTDLCIQVFFVRNGRVIGREHFIFEGEANEDKGYSLSTFIKQFYTKVQYVPSEIVLQSEVDDSETIAKWLTEKRGFKVALRVPQRGDLVKLVHMVSENAEITLKLHRERQSREGTVHSEGMAQLVKLLGLEEAPARIESYDISNTGSSEIVASMVVFENGRPARQEYRKFKMKSIEQQNDYGSMQETLFRRLNRAKREKEEGTENAKFSKLPDLILVDGGSNHVNAARQVVEELGYNFKIAGMAKDDRHRTKSLVYMGNEYELATNMPLLRFITEIQDETHRVAVEYNRKLREKRYVRSELDEIEGIGQTRKKALIKHFKSVAAIRKADIAQLQEVNGISEKIAKNIYEYFN</sequence>
<organism>
    <name type="scientific">Ruminiclostridium cellulolyticum (strain ATCC 35319 / DSM 5812 / JCM 6584 / H10)</name>
    <name type="common">Clostridium cellulolyticum</name>
    <dbReference type="NCBI Taxonomy" id="394503"/>
    <lineage>
        <taxon>Bacteria</taxon>
        <taxon>Bacillati</taxon>
        <taxon>Bacillota</taxon>
        <taxon>Clostridia</taxon>
        <taxon>Eubacteriales</taxon>
        <taxon>Oscillospiraceae</taxon>
        <taxon>Ruminiclostridium</taxon>
    </lineage>
</organism>
<feature type="chain" id="PRO_1000200577" description="UvrABC system protein C">
    <location>
        <begin position="1"/>
        <end position="613"/>
    </location>
</feature>
<feature type="domain" description="GIY-YIG" evidence="1">
    <location>
        <begin position="13"/>
        <end position="92"/>
    </location>
</feature>
<feature type="domain" description="UVR" evidence="1">
    <location>
        <begin position="204"/>
        <end position="239"/>
    </location>
</feature>
<protein>
    <recommendedName>
        <fullName evidence="1">UvrABC system protein C</fullName>
        <shortName evidence="1">Protein UvrC</shortName>
    </recommendedName>
    <alternativeName>
        <fullName evidence="1">Excinuclease ABC subunit C</fullName>
    </alternativeName>
</protein>
<proteinExistence type="inferred from homology"/>
<dbReference type="EMBL" id="CP001348">
    <property type="protein sequence ID" value="ACL75185.1"/>
    <property type="molecule type" value="Genomic_DNA"/>
</dbReference>
<dbReference type="RefSeq" id="WP_015924347.1">
    <property type="nucleotide sequence ID" value="NC_011898.1"/>
</dbReference>
<dbReference type="SMR" id="B8I8F2"/>
<dbReference type="STRING" id="394503.Ccel_0807"/>
<dbReference type="KEGG" id="cce:Ccel_0807"/>
<dbReference type="eggNOG" id="COG0322">
    <property type="taxonomic scope" value="Bacteria"/>
</dbReference>
<dbReference type="HOGENOM" id="CLU_014841_3_2_9"/>
<dbReference type="OrthoDB" id="9804933at2"/>
<dbReference type="Proteomes" id="UP000001349">
    <property type="component" value="Chromosome"/>
</dbReference>
<dbReference type="GO" id="GO:0005737">
    <property type="term" value="C:cytoplasm"/>
    <property type="evidence" value="ECO:0007669"/>
    <property type="project" value="UniProtKB-SubCell"/>
</dbReference>
<dbReference type="GO" id="GO:0009380">
    <property type="term" value="C:excinuclease repair complex"/>
    <property type="evidence" value="ECO:0007669"/>
    <property type="project" value="InterPro"/>
</dbReference>
<dbReference type="GO" id="GO:0003677">
    <property type="term" value="F:DNA binding"/>
    <property type="evidence" value="ECO:0007669"/>
    <property type="project" value="UniProtKB-UniRule"/>
</dbReference>
<dbReference type="GO" id="GO:0009381">
    <property type="term" value="F:excinuclease ABC activity"/>
    <property type="evidence" value="ECO:0007669"/>
    <property type="project" value="UniProtKB-UniRule"/>
</dbReference>
<dbReference type="GO" id="GO:0006289">
    <property type="term" value="P:nucleotide-excision repair"/>
    <property type="evidence" value="ECO:0007669"/>
    <property type="project" value="UniProtKB-UniRule"/>
</dbReference>
<dbReference type="GO" id="GO:0009432">
    <property type="term" value="P:SOS response"/>
    <property type="evidence" value="ECO:0007669"/>
    <property type="project" value="UniProtKB-UniRule"/>
</dbReference>
<dbReference type="CDD" id="cd10434">
    <property type="entry name" value="GIY-YIG_UvrC_Cho"/>
    <property type="match status" value="1"/>
</dbReference>
<dbReference type="FunFam" id="3.40.1440.10:FF:000001">
    <property type="entry name" value="UvrABC system protein C"/>
    <property type="match status" value="1"/>
</dbReference>
<dbReference type="Gene3D" id="1.10.150.20">
    <property type="entry name" value="5' to 3' exonuclease, C-terminal subdomain"/>
    <property type="match status" value="1"/>
</dbReference>
<dbReference type="Gene3D" id="3.40.1440.10">
    <property type="entry name" value="GIY-YIG endonuclease"/>
    <property type="match status" value="1"/>
</dbReference>
<dbReference type="Gene3D" id="4.10.860.10">
    <property type="entry name" value="UVR domain"/>
    <property type="match status" value="1"/>
</dbReference>
<dbReference type="Gene3D" id="3.30.420.340">
    <property type="entry name" value="UvrC, RNAse H endonuclease domain"/>
    <property type="match status" value="1"/>
</dbReference>
<dbReference type="HAMAP" id="MF_00203">
    <property type="entry name" value="UvrC"/>
    <property type="match status" value="1"/>
</dbReference>
<dbReference type="InterPro" id="IPR000305">
    <property type="entry name" value="GIY-YIG_endonuc"/>
</dbReference>
<dbReference type="InterPro" id="IPR035901">
    <property type="entry name" value="GIY-YIG_endonuc_sf"/>
</dbReference>
<dbReference type="InterPro" id="IPR047296">
    <property type="entry name" value="GIY-YIG_UvrC_Cho"/>
</dbReference>
<dbReference type="InterPro" id="IPR003583">
    <property type="entry name" value="Hlx-hairpin-Hlx_DNA-bd_motif"/>
</dbReference>
<dbReference type="InterPro" id="IPR010994">
    <property type="entry name" value="RuvA_2-like"/>
</dbReference>
<dbReference type="InterPro" id="IPR001943">
    <property type="entry name" value="UVR_dom"/>
</dbReference>
<dbReference type="InterPro" id="IPR036876">
    <property type="entry name" value="UVR_dom_sf"/>
</dbReference>
<dbReference type="InterPro" id="IPR050066">
    <property type="entry name" value="UvrABC_protein_C"/>
</dbReference>
<dbReference type="InterPro" id="IPR004791">
    <property type="entry name" value="UvrC"/>
</dbReference>
<dbReference type="InterPro" id="IPR001162">
    <property type="entry name" value="UvrC_RNase_H_dom"/>
</dbReference>
<dbReference type="InterPro" id="IPR038476">
    <property type="entry name" value="UvrC_RNase_H_dom_sf"/>
</dbReference>
<dbReference type="NCBIfam" id="NF001824">
    <property type="entry name" value="PRK00558.1-5"/>
    <property type="match status" value="1"/>
</dbReference>
<dbReference type="NCBIfam" id="TIGR00194">
    <property type="entry name" value="uvrC"/>
    <property type="match status" value="1"/>
</dbReference>
<dbReference type="PANTHER" id="PTHR30562:SF1">
    <property type="entry name" value="UVRABC SYSTEM PROTEIN C"/>
    <property type="match status" value="1"/>
</dbReference>
<dbReference type="PANTHER" id="PTHR30562">
    <property type="entry name" value="UVRC/OXIDOREDUCTASE"/>
    <property type="match status" value="1"/>
</dbReference>
<dbReference type="Pfam" id="PF01541">
    <property type="entry name" value="GIY-YIG"/>
    <property type="match status" value="1"/>
</dbReference>
<dbReference type="Pfam" id="PF14520">
    <property type="entry name" value="HHH_5"/>
    <property type="match status" value="1"/>
</dbReference>
<dbReference type="Pfam" id="PF02151">
    <property type="entry name" value="UVR"/>
    <property type="match status" value="1"/>
</dbReference>
<dbReference type="Pfam" id="PF22920">
    <property type="entry name" value="UvrC_RNaseH"/>
    <property type="match status" value="1"/>
</dbReference>
<dbReference type="Pfam" id="PF08459">
    <property type="entry name" value="UvrC_RNaseH_dom"/>
    <property type="match status" value="1"/>
</dbReference>
<dbReference type="SMART" id="SM00465">
    <property type="entry name" value="GIYc"/>
    <property type="match status" value="1"/>
</dbReference>
<dbReference type="SMART" id="SM00278">
    <property type="entry name" value="HhH1"/>
    <property type="match status" value="2"/>
</dbReference>
<dbReference type="SUPFAM" id="SSF46600">
    <property type="entry name" value="C-terminal UvrC-binding domain of UvrB"/>
    <property type="match status" value="1"/>
</dbReference>
<dbReference type="SUPFAM" id="SSF82771">
    <property type="entry name" value="GIY-YIG endonuclease"/>
    <property type="match status" value="1"/>
</dbReference>
<dbReference type="SUPFAM" id="SSF47781">
    <property type="entry name" value="RuvA domain 2-like"/>
    <property type="match status" value="1"/>
</dbReference>
<dbReference type="PROSITE" id="PS50164">
    <property type="entry name" value="GIY_YIG"/>
    <property type="match status" value="1"/>
</dbReference>
<dbReference type="PROSITE" id="PS50151">
    <property type="entry name" value="UVR"/>
    <property type="match status" value="1"/>
</dbReference>
<dbReference type="PROSITE" id="PS50165">
    <property type="entry name" value="UVRC"/>
    <property type="match status" value="1"/>
</dbReference>
<accession>B8I8F2</accession>